<keyword id="KW-0687">Ribonucleoprotein</keyword>
<keyword id="KW-0689">Ribosomal protein</keyword>
<keyword id="KW-0694">RNA-binding</keyword>
<keyword id="KW-0699">rRNA-binding</keyword>
<sequence length="122" mass="13501">MIQMQTNLDVADNSGARRVMCIKVLGGSKRRYATVGDVIVVSIKEAIPRGKVKKGDVMKAVVVRVRKDIRRPDGSVIRFDRNAAVLINNQSEPVGTRIFGPVPRELRAKNHMKIISLAPEVL</sequence>
<dbReference type="EMBL" id="CP000283">
    <property type="protein sequence ID" value="ABE40400.1"/>
    <property type="molecule type" value="Genomic_DNA"/>
</dbReference>
<dbReference type="SMR" id="Q134T9"/>
<dbReference type="STRING" id="316057.RPD_3174"/>
<dbReference type="KEGG" id="rpd:RPD_3174"/>
<dbReference type="eggNOG" id="COG0093">
    <property type="taxonomic scope" value="Bacteria"/>
</dbReference>
<dbReference type="HOGENOM" id="CLU_095071_2_1_5"/>
<dbReference type="BioCyc" id="RPAL316057:RPD_RS15935-MONOMER"/>
<dbReference type="Proteomes" id="UP000001818">
    <property type="component" value="Chromosome"/>
</dbReference>
<dbReference type="GO" id="GO:0022625">
    <property type="term" value="C:cytosolic large ribosomal subunit"/>
    <property type="evidence" value="ECO:0007669"/>
    <property type="project" value="TreeGrafter"/>
</dbReference>
<dbReference type="GO" id="GO:0070180">
    <property type="term" value="F:large ribosomal subunit rRNA binding"/>
    <property type="evidence" value="ECO:0007669"/>
    <property type="project" value="TreeGrafter"/>
</dbReference>
<dbReference type="GO" id="GO:0003735">
    <property type="term" value="F:structural constituent of ribosome"/>
    <property type="evidence" value="ECO:0007669"/>
    <property type="project" value="InterPro"/>
</dbReference>
<dbReference type="GO" id="GO:0006412">
    <property type="term" value="P:translation"/>
    <property type="evidence" value="ECO:0007669"/>
    <property type="project" value="UniProtKB-UniRule"/>
</dbReference>
<dbReference type="CDD" id="cd00337">
    <property type="entry name" value="Ribosomal_uL14"/>
    <property type="match status" value="1"/>
</dbReference>
<dbReference type="FunFam" id="2.40.150.20:FF:000001">
    <property type="entry name" value="50S ribosomal protein L14"/>
    <property type="match status" value="1"/>
</dbReference>
<dbReference type="Gene3D" id="2.40.150.20">
    <property type="entry name" value="Ribosomal protein L14"/>
    <property type="match status" value="1"/>
</dbReference>
<dbReference type="HAMAP" id="MF_01367">
    <property type="entry name" value="Ribosomal_uL14"/>
    <property type="match status" value="1"/>
</dbReference>
<dbReference type="InterPro" id="IPR000218">
    <property type="entry name" value="Ribosomal_uL14"/>
</dbReference>
<dbReference type="InterPro" id="IPR005745">
    <property type="entry name" value="Ribosomal_uL14_bac-type"/>
</dbReference>
<dbReference type="InterPro" id="IPR019972">
    <property type="entry name" value="Ribosomal_uL14_CS"/>
</dbReference>
<dbReference type="InterPro" id="IPR036853">
    <property type="entry name" value="Ribosomal_uL14_sf"/>
</dbReference>
<dbReference type="NCBIfam" id="TIGR01067">
    <property type="entry name" value="rplN_bact"/>
    <property type="match status" value="1"/>
</dbReference>
<dbReference type="PANTHER" id="PTHR11761">
    <property type="entry name" value="50S/60S RIBOSOMAL PROTEIN L14/L23"/>
    <property type="match status" value="1"/>
</dbReference>
<dbReference type="PANTHER" id="PTHR11761:SF3">
    <property type="entry name" value="LARGE RIBOSOMAL SUBUNIT PROTEIN UL14M"/>
    <property type="match status" value="1"/>
</dbReference>
<dbReference type="Pfam" id="PF00238">
    <property type="entry name" value="Ribosomal_L14"/>
    <property type="match status" value="1"/>
</dbReference>
<dbReference type="SMART" id="SM01374">
    <property type="entry name" value="Ribosomal_L14"/>
    <property type="match status" value="1"/>
</dbReference>
<dbReference type="SUPFAM" id="SSF50193">
    <property type="entry name" value="Ribosomal protein L14"/>
    <property type="match status" value="1"/>
</dbReference>
<dbReference type="PROSITE" id="PS00049">
    <property type="entry name" value="RIBOSOMAL_L14"/>
    <property type="match status" value="1"/>
</dbReference>
<comment type="function">
    <text evidence="1">Binds to 23S rRNA. Forms part of two intersubunit bridges in the 70S ribosome.</text>
</comment>
<comment type="subunit">
    <text evidence="1">Part of the 50S ribosomal subunit. Forms a cluster with proteins L3 and L19. In the 70S ribosome, L14 and L19 interact and together make contacts with the 16S rRNA in bridges B5 and B8.</text>
</comment>
<comment type="similarity">
    <text evidence="1">Belongs to the universal ribosomal protein uL14 family.</text>
</comment>
<proteinExistence type="inferred from homology"/>
<organism>
    <name type="scientific">Rhodopseudomonas palustris (strain BisB5)</name>
    <dbReference type="NCBI Taxonomy" id="316057"/>
    <lineage>
        <taxon>Bacteria</taxon>
        <taxon>Pseudomonadati</taxon>
        <taxon>Pseudomonadota</taxon>
        <taxon>Alphaproteobacteria</taxon>
        <taxon>Hyphomicrobiales</taxon>
        <taxon>Nitrobacteraceae</taxon>
        <taxon>Rhodopseudomonas</taxon>
    </lineage>
</organism>
<protein>
    <recommendedName>
        <fullName evidence="1">Large ribosomal subunit protein uL14</fullName>
    </recommendedName>
    <alternativeName>
        <fullName evidence="2">50S ribosomal protein L14</fullName>
    </alternativeName>
</protein>
<accession>Q134T9</accession>
<feature type="chain" id="PRO_0000266545" description="Large ribosomal subunit protein uL14">
    <location>
        <begin position="1"/>
        <end position="122"/>
    </location>
</feature>
<name>RL14_RHOPS</name>
<reference key="1">
    <citation type="submission" date="2006-03" db="EMBL/GenBank/DDBJ databases">
        <title>Complete sequence of Rhodopseudomonas palustris BisB5.</title>
        <authorList>
            <consortium name="US DOE Joint Genome Institute"/>
            <person name="Copeland A."/>
            <person name="Lucas S."/>
            <person name="Lapidus A."/>
            <person name="Barry K."/>
            <person name="Detter J.C."/>
            <person name="Glavina del Rio T."/>
            <person name="Hammon N."/>
            <person name="Israni S."/>
            <person name="Dalin E."/>
            <person name="Tice H."/>
            <person name="Pitluck S."/>
            <person name="Chain P."/>
            <person name="Malfatti S."/>
            <person name="Shin M."/>
            <person name="Vergez L."/>
            <person name="Schmutz J."/>
            <person name="Larimer F."/>
            <person name="Land M."/>
            <person name="Hauser L."/>
            <person name="Pelletier D.A."/>
            <person name="Kyrpides N."/>
            <person name="Lykidis A."/>
            <person name="Oda Y."/>
            <person name="Harwood C.S."/>
            <person name="Richardson P."/>
        </authorList>
    </citation>
    <scope>NUCLEOTIDE SEQUENCE [LARGE SCALE GENOMIC DNA]</scope>
    <source>
        <strain>BisB5</strain>
    </source>
</reference>
<evidence type="ECO:0000255" key="1">
    <source>
        <dbReference type="HAMAP-Rule" id="MF_01367"/>
    </source>
</evidence>
<evidence type="ECO:0000305" key="2"/>
<gene>
    <name evidence="1" type="primary">rplN</name>
    <name type="ordered locus">RPD_3174</name>
</gene>